<dbReference type="EMBL" id="AE007317">
    <property type="protein sequence ID" value="AAK99007.1"/>
    <property type="molecule type" value="Genomic_DNA"/>
</dbReference>
<dbReference type="PIR" id="C97897">
    <property type="entry name" value="C97897"/>
</dbReference>
<dbReference type="RefSeq" id="NP_357797.1">
    <property type="nucleotide sequence ID" value="NC_003098.1"/>
</dbReference>
<dbReference type="RefSeq" id="WP_000245505.1">
    <property type="nucleotide sequence ID" value="NC_003098.1"/>
</dbReference>
<dbReference type="SMR" id="P66633"/>
<dbReference type="STRING" id="171101.spr0203"/>
<dbReference type="GeneID" id="45652295"/>
<dbReference type="KEGG" id="spr:spr0203"/>
<dbReference type="PATRIC" id="fig|171101.6.peg.235"/>
<dbReference type="eggNOG" id="COG0096">
    <property type="taxonomic scope" value="Bacteria"/>
</dbReference>
<dbReference type="HOGENOM" id="CLU_098428_0_2_9"/>
<dbReference type="PRO" id="PR:P66633"/>
<dbReference type="Proteomes" id="UP000000586">
    <property type="component" value="Chromosome"/>
</dbReference>
<dbReference type="GO" id="GO:0022627">
    <property type="term" value="C:cytosolic small ribosomal subunit"/>
    <property type="evidence" value="ECO:0000318"/>
    <property type="project" value="GO_Central"/>
</dbReference>
<dbReference type="GO" id="GO:0019843">
    <property type="term" value="F:rRNA binding"/>
    <property type="evidence" value="ECO:0007669"/>
    <property type="project" value="UniProtKB-UniRule"/>
</dbReference>
<dbReference type="GO" id="GO:0003735">
    <property type="term" value="F:structural constituent of ribosome"/>
    <property type="evidence" value="ECO:0000318"/>
    <property type="project" value="GO_Central"/>
</dbReference>
<dbReference type="GO" id="GO:0006412">
    <property type="term" value="P:translation"/>
    <property type="evidence" value="ECO:0007669"/>
    <property type="project" value="UniProtKB-UniRule"/>
</dbReference>
<dbReference type="FunFam" id="3.30.1370.30:FF:000002">
    <property type="entry name" value="30S ribosomal protein S8"/>
    <property type="match status" value="1"/>
</dbReference>
<dbReference type="FunFam" id="3.30.1490.10:FF:000001">
    <property type="entry name" value="30S ribosomal protein S8"/>
    <property type="match status" value="1"/>
</dbReference>
<dbReference type="Gene3D" id="3.30.1370.30">
    <property type="match status" value="1"/>
</dbReference>
<dbReference type="Gene3D" id="3.30.1490.10">
    <property type="match status" value="1"/>
</dbReference>
<dbReference type="HAMAP" id="MF_01302_B">
    <property type="entry name" value="Ribosomal_uS8_B"/>
    <property type="match status" value="1"/>
</dbReference>
<dbReference type="InterPro" id="IPR000630">
    <property type="entry name" value="Ribosomal_uS8"/>
</dbReference>
<dbReference type="InterPro" id="IPR047863">
    <property type="entry name" value="Ribosomal_uS8_CS"/>
</dbReference>
<dbReference type="InterPro" id="IPR035987">
    <property type="entry name" value="Ribosomal_uS8_sf"/>
</dbReference>
<dbReference type="NCBIfam" id="NF001109">
    <property type="entry name" value="PRK00136.1"/>
    <property type="match status" value="1"/>
</dbReference>
<dbReference type="PANTHER" id="PTHR11758">
    <property type="entry name" value="40S RIBOSOMAL PROTEIN S15A"/>
    <property type="match status" value="1"/>
</dbReference>
<dbReference type="Pfam" id="PF00410">
    <property type="entry name" value="Ribosomal_S8"/>
    <property type="match status" value="1"/>
</dbReference>
<dbReference type="SUPFAM" id="SSF56047">
    <property type="entry name" value="Ribosomal protein S8"/>
    <property type="match status" value="1"/>
</dbReference>
<dbReference type="PROSITE" id="PS00053">
    <property type="entry name" value="RIBOSOMAL_S8"/>
    <property type="match status" value="1"/>
</dbReference>
<sequence>MVMTDPIADFLTRIRNANQAKHEVLEVPASNIKKGIAEILKREGFVKNVEIIEDDKQGVIRVFLKYGPNGEKVITNLKRVSKPGLRVYKKREDLPKVLNGLGIAILSTSEGLLTDKEARQKNVGGEVIAYVW</sequence>
<name>RS8_STRR6</name>
<comment type="function">
    <text evidence="1">One of the primary rRNA binding proteins, it binds directly to 16S rRNA central domain where it helps coordinate assembly of the platform of the 30S subunit.</text>
</comment>
<comment type="subunit">
    <text evidence="1">Part of the 30S ribosomal subunit. Contacts proteins S5 and S12.</text>
</comment>
<comment type="similarity">
    <text evidence="1">Belongs to the universal ribosomal protein uS8 family.</text>
</comment>
<accession>P66633</accession>
<accession>Q97SU8</accession>
<gene>
    <name evidence="1" type="primary">rpsH</name>
    <name type="ordered locus">spr0203</name>
</gene>
<organism>
    <name type="scientific">Streptococcus pneumoniae (strain ATCC BAA-255 / R6)</name>
    <dbReference type="NCBI Taxonomy" id="171101"/>
    <lineage>
        <taxon>Bacteria</taxon>
        <taxon>Bacillati</taxon>
        <taxon>Bacillota</taxon>
        <taxon>Bacilli</taxon>
        <taxon>Lactobacillales</taxon>
        <taxon>Streptococcaceae</taxon>
        <taxon>Streptococcus</taxon>
    </lineage>
</organism>
<feature type="chain" id="PRO_0000126497" description="Small ribosomal subunit protein uS8">
    <location>
        <begin position="1"/>
        <end position="132"/>
    </location>
</feature>
<evidence type="ECO:0000255" key="1">
    <source>
        <dbReference type="HAMAP-Rule" id="MF_01302"/>
    </source>
</evidence>
<evidence type="ECO:0000305" key="2"/>
<reference key="1">
    <citation type="journal article" date="2001" name="J. Bacteriol.">
        <title>Genome of the bacterium Streptococcus pneumoniae strain R6.</title>
        <authorList>
            <person name="Hoskins J."/>
            <person name="Alborn W.E. Jr."/>
            <person name="Arnold J."/>
            <person name="Blaszczak L.C."/>
            <person name="Burgett S."/>
            <person name="DeHoff B.S."/>
            <person name="Estrem S.T."/>
            <person name="Fritz L."/>
            <person name="Fu D.-J."/>
            <person name="Fuller W."/>
            <person name="Geringer C."/>
            <person name="Gilmour R."/>
            <person name="Glass J.S."/>
            <person name="Khoja H."/>
            <person name="Kraft A.R."/>
            <person name="Lagace R.E."/>
            <person name="LeBlanc D.J."/>
            <person name="Lee L.N."/>
            <person name="Lefkowitz E.J."/>
            <person name="Lu J."/>
            <person name="Matsushima P."/>
            <person name="McAhren S.M."/>
            <person name="McHenney M."/>
            <person name="McLeaster K."/>
            <person name="Mundy C.W."/>
            <person name="Nicas T.I."/>
            <person name="Norris F.H."/>
            <person name="O'Gara M."/>
            <person name="Peery R.B."/>
            <person name="Robertson G.T."/>
            <person name="Rockey P."/>
            <person name="Sun P.-M."/>
            <person name="Winkler M.E."/>
            <person name="Yang Y."/>
            <person name="Young-Bellido M."/>
            <person name="Zhao G."/>
            <person name="Zook C.A."/>
            <person name="Baltz R.H."/>
            <person name="Jaskunas S.R."/>
            <person name="Rosteck P.R. Jr."/>
            <person name="Skatrud P.L."/>
            <person name="Glass J.I."/>
        </authorList>
    </citation>
    <scope>NUCLEOTIDE SEQUENCE [LARGE SCALE GENOMIC DNA]</scope>
    <source>
        <strain>ATCC BAA-255 / R6</strain>
    </source>
</reference>
<proteinExistence type="inferred from homology"/>
<protein>
    <recommendedName>
        <fullName evidence="1">Small ribosomal subunit protein uS8</fullName>
    </recommendedName>
    <alternativeName>
        <fullName evidence="2">30S ribosomal protein S8</fullName>
    </alternativeName>
</protein>
<keyword id="KW-1185">Reference proteome</keyword>
<keyword id="KW-0687">Ribonucleoprotein</keyword>
<keyword id="KW-0689">Ribosomal protein</keyword>
<keyword id="KW-0694">RNA-binding</keyword>
<keyword id="KW-0699">rRNA-binding</keyword>